<protein>
    <recommendedName>
        <fullName evidence="1">Na(+)-translocating NADH-quinone reductase subunit B</fullName>
        <shortName evidence="1">Na(+)-NQR subunit B</shortName>
        <shortName evidence="1">Na(+)-translocating NQR subunit B</shortName>
        <ecNumber evidence="1">7.2.1.1</ecNumber>
    </recommendedName>
    <alternativeName>
        <fullName evidence="1">NQR complex subunit B</fullName>
    </alternativeName>
    <alternativeName>
        <fullName evidence="1">NQR-1 subunit B</fullName>
    </alternativeName>
</protein>
<name>NQRB_KLEP3</name>
<evidence type="ECO:0000255" key="1">
    <source>
        <dbReference type="HAMAP-Rule" id="MF_00426"/>
    </source>
</evidence>
<gene>
    <name evidence="1" type="primary">nqrB</name>
    <name type="ordered locus">KPK_4492</name>
</gene>
<accession>B5Y1F0</accession>
<dbReference type="EC" id="7.2.1.1" evidence="1"/>
<dbReference type="EMBL" id="CP000964">
    <property type="protein sequence ID" value="ACI07191.1"/>
    <property type="molecule type" value="Genomic_DNA"/>
</dbReference>
<dbReference type="SMR" id="B5Y1F0"/>
<dbReference type="KEGG" id="kpe:KPK_4492"/>
<dbReference type="HOGENOM" id="CLU_042020_1_1_6"/>
<dbReference type="Proteomes" id="UP000001734">
    <property type="component" value="Chromosome"/>
</dbReference>
<dbReference type="GO" id="GO:0005886">
    <property type="term" value="C:plasma membrane"/>
    <property type="evidence" value="ECO:0007669"/>
    <property type="project" value="UniProtKB-SubCell"/>
</dbReference>
<dbReference type="GO" id="GO:0010181">
    <property type="term" value="F:FMN binding"/>
    <property type="evidence" value="ECO:0007669"/>
    <property type="project" value="InterPro"/>
</dbReference>
<dbReference type="GO" id="GO:0016655">
    <property type="term" value="F:oxidoreductase activity, acting on NAD(P)H, quinone or similar compound as acceptor"/>
    <property type="evidence" value="ECO:0007669"/>
    <property type="project" value="UniProtKB-UniRule"/>
</dbReference>
<dbReference type="GO" id="GO:0022904">
    <property type="term" value="P:respiratory electron transport chain"/>
    <property type="evidence" value="ECO:0007669"/>
    <property type="project" value="InterPro"/>
</dbReference>
<dbReference type="GO" id="GO:0006814">
    <property type="term" value="P:sodium ion transport"/>
    <property type="evidence" value="ECO:0007669"/>
    <property type="project" value="UniProtKB-UniRule"/>
</dbReference>
<dbReference type="GO" id="GO:0055085">
    <property type="term" value="P:transmembrane transport"/>
    <property type="evidence" value="ECO:0007669"/>
    <property type="project" value="InterPro"/>
</dbReference>
<dbReference type="HAMAP" id="MF_00426">
    <property type="entry name" value="NqrB"/>
    <property type="match status" value="1"/>
</dbReference>
<dbReference type="InterPro" id="IPR010966">
    <property type="entry name" value="NqrB"/>
</dbReference>
<dbReference type="InterPro" id="IPR004338">
    <property type="entry name" value="NqrB/RnfD"/>
</dbReference>
<dbReference type="NCBIfam" id="TIGR01937">
    <property type="entry name" value="nqrB"/>
    <property type="match status" value="1"/>
</dbReference>
<dbReference type="NCBIfam" id="NF003756">
    <property type="entry name" value="PRK05349.1"/>
    <property type="match status" value="1"/>
</dbReference>
<dbReference type="PANTHER" id="PTHR30578">
    <property type="entry name" value="ELECTRON TRANSPORT COMPLEX PROTEIN RNFD"/>
    <property type="match status" value="1"/>
</dbReference>
<dbReference type="PANTHER" id="PTHR30578:SF1">
    <property type="entry name" value="NA(+)-TRANSLOCATING NADH-QUINONE REDUCTASE SUBUNIT B"/>
    <property type="match status" value="1"/>
</dbReference>
<dbReference type="Pfam" id="PF03116">
    <property type="entry name" value="NQR2_RnfD_RnfE"/>
    <property type="match status" value="1"/>
</dbReference>
<dbReference type="PIRSF" id="PIRSF016055">
    <property type="entry name" value="NADH-UbQ_OxRdtase_B_su"/>
    <property type="match status" value="1"/>
</dbReference>
<proteinExistence type="inferred from homology"/>
<organism>
    <name type="scientific">Klebsiella pneumoniae (strain 342)</name>
    <dbReference type="NCBI Taxonomy" id="507522"/>
    <lineage>
        <taxon>Bacteria</taxon>
        <taxon>Pseudomonadati</taxon>
        <taxon>Pseudomonadota</taxon>
        <taxon>Gammaproteobacteria</taxon>
        <taxon>Enterobacterales</taxon>
        <taxon>Enterobacteriaceae</taxon>
        <taxon>Klebsiella/Raoultella group</taxon>
        <taxon>Klebsiella</taxon>
        <taxon>Klebsiella pneumoniae complex</taxon>
    </lineage>
</organism>
<reference key="1">
    <citation type="journal article" date="2008" name="PLoS Genet.">
        <title>Complete genome sequence of the N2-fixing broad host range endophyte Klebsiella pneumoniae 342 and virulence predictions verified in mice.</title>
        <authorList>
            <person name="Fouts D.E."/>
            <person name="Tyler H.L."/>
            <person name="DeBoy R.T."/>
            <person name="Daugherty S."/>
            <person name="Ren Q."/>
            <person name="Badger J.H."/>
            <person name="Durkin A.S."/>
            <person name="Huot H."/>
            <person name="Shrivastava S."/>
            <person name="Kothari S."/>
            <person name="Dodson R.J."/>
            <person name="Mohamoud Y."/>
            <person name="Khouri H."/>
            <person name="Roesch L.F.W."/>
            <person name="Krogfelt K.A."/>
            <person name="Struve C."/>
            <person name="Triplett E.W."/>
            <person name="Methe B.A."/>
        </authorList>
    </citation>
    <scope>NUCLEOTIDE SEQUENCE [LARGE SCALE GENOMIC DNA]</scope>
    <source>
        <strain>342</strain>
    </source>
</reference>
<feature type="chain" id="PRO_1000191664" description="Na(+)-translocating NADH-quinone reductase subunit B">
    <location>
        <begin position="1"/>
        <end position="412"/>
    </location>
</feature>
<feature type="transmembrane region" description="Helical" evidence="1">
    <location>
        <begin position="57"/>
        <end position="77"/>
    </location>
</feature>
<feature type="transmembrane region" description="Helical" evidence="1">
    <location>
        <begin position="127"/>
        <end position="147"/>
    </location>
</feature>
<feature type="transmembrane region" description="Helical" evidence="1">
    <location>
        <begin position="163"/>
        <end position="183"/>
    </location>
</feature>
<feature type="transmembrane region" description="Helical" evidence="1">
    <location>
        <begin position="270"/>
        <end position="290"/>
    </location>
</feature>
<feature type="transmembrane region" description="Helical" evidence="1">
    <location>
        <begin position="297"/>
        <end position="317"/>
    </location>
</feature>
<feature type="transmembrane region" description="Helical" evidence="1">
    <location>
        <begin position="322"/>
        <end position="342"/>
    </location>
</feature>
<feature type="transmembrane region" description="Helical" evidence="1">
    <location>
        <begin position="358"/>
        <end position="378"/>
    </location>
</feature>
<feature type="transmembrane region" description="Helical" evidence="1">
    <location>
        <begin position="381"/>
        <end position="401"/>
    </location>
</feature>
<feature type="modified residue" description="FMN phosphoryl threonine" evidence="1">
    <location>
        <position position="236"/>
    </location>
</feature>
<comment type="function">
    <text evidence="1">NQR complex catalyzes the reduction of ubiquinone-1 to ubiquinol by two successive reactions, coupled with the transport of Na(+) ions from the cytoplasm to the periplasm. NqrA to NqrE are probably involved in the second step, the conversion of ubisemiquinone to ubiquinol.</text>
</comment>
<comment type="catalytic activity">
    <reaction evidence="1">
        <text>a ubiquinone + n Na(+)(in) + NADH + H(+) = a ubiquinol + n Na(+)(out) + NAD(+)</text>
        <dbReference type="Rhea" id="RHEA:47748"/>
        <dbReference type="Rhea" id="RHEA-COMP:9565"/>
        <dbReference type="Rhea" id="RHEA-COMP:9566"/>
        <dbReference type="ChEBI" id="CHEBI:15378"/>
        <dbReference type="ChEBI" id="CHEBI:16389"/>
        <dbReference type="ChEBI" id="CHEBI:17976"/>
        <dbReference type="ChEBI" id="CHEBI:29101"/>
        <dbReference type="ChEBI" id="CHEBI:57540"/>
        <dbReference type="ChEBI" id="CHEBI:57945"/>
        <dbReference type="EC" id="7.2.1.1"/>
    </reaction>
</comment>
<comment type="cofactor">
    <cofactor evidence="1">
        <name>FMN</name>
        <dbReference type="ChEBI" id="CHEBI:58210"/>
    </cofactor>
</comment>
<comment type="subunit">
    <text evidence="1">Composed of six subunits; NqrA, NqrB, NqrC, NqrD, NqrE and NqrF.</text>
</comment>
<comment type="subcellular location">
    <subcellularLocation>
        <location evidence="1">Cell inner membrane</location>
        <topology evidence="1">Multi-pass membrane protein</topology>
    </subcellularLocation>
</comment>
<comment type="similarity">
    <text evidence="1">Belongs to the NqrB/RnfD family.</text>
</comment>
<sequence>MGLKHLIEKLEPHFTHGGKLEKYYPLYEAAATIFYTPGQVTRGAAHVRDAIDLKRMMILVWFAVFPAMFWGMYNVGLQTIPALHKLYGTEQLQQVIANNWHYSVAQWLGVSFSADAGWLSMMTLGAVFFLPIYITVFIVGGFWEVLFAIVRKHEINEGFFVTSILFALIVPPTLPLWQAALGISFGVVIAKEIFGGTGRNFLNPALAGRAFLFFAYPAQISGDLVWTAADGFSGATPLSQWASGGGEALVNVATGIPVSWMDAFLGNIPGSIGEVSTLMILIGGAIILFGRVASWRIVAGVMIGMIATATLFNVIGSDTNPMFSMPWYWHLVLGGFAFGMMFMATDPVSASFTDKGKWSYGVLIGVMCVLIRVVNPAYPEGMMLAILFANLFAPLFDYLVVQANIKRRKSRG</sequence>
<keyword id="KW-0997">Cell inner membrane</keyword>
<keyword id="KW-1003">Cell membrane</keyword>
<keyword id="KW-0285">Flavoprotein</keyword>
<keyword id="KW-0288">FMN</keyword>
<keyword id="KW-0406">Ion transport</keyword>
<keyword id="KW-0472">Membrane</keyword>
<keyword id="KW-0520">NAD</keyword>
<keyword id="KW-0597">Phosphoprotein</keyword>
<keyword id="KW-0915">Sodium</keyword>
<keyword id="KW-0739">Sodium transport</keyword>
<keyword id="KW-1278">Translocase</keyword>
<keyword id="KW-0812">Transmembrane</keyword>
<keyword id="KW-1133">Transmembrane helix</keyword>
<keyword id="KW-0813">Transport</keyword>
<keyword id="KW-0830">Ubiquinone</keyword>